<name>YOAT_BACSU</name>
<protein>
    <recommendedName>
        <fullName>Uncharacterized protein YoaT</fullName>
    </recommendedName>
</protein>
<proteinExistence type="predicted"/>
<organism>
    <name type="scientific">Bacillus subtilis (strain 168)</name>
    <dbReference type="NCBI Taxonomy" id="224308"/>
    <lineage>
        <taxon>Bacteria</taxon>
        <taxon>Bacillati</taxon>
        <taxon>Bacillota</taxon>
        <taxon>Bacilli</taxon>
        <taxon>Bacillales</taxon>
        <taxon>Bacillaceae</taxon>
        <taxon>Bacillus</taxon>
    </lineage>
</organism>
<keyword id="KW-1003">Cell membrane</keyword>
<keyword id="KW-0472">Membrane</keyword>
<keyword id="KW-1185">Reference proteome</keyword>
<keyword id="KW-0812">Transmembrane</keyword>
<keyword id="KW-1133">Transmembrane helix</keyword>
<accession>O34535</accession>
<accession>Q796F0</accession>
<dbReference type="EMBL" id="AF027868">
    <property type="protein sequence ID" value="AAB84424.1"/>
    <property type="molecule type" value="Genomic_DNA"/>
</dbReference>
<dbReference type="EMBL" id="AL009126">
    <property type="protein sequence ID" value="CAB13767.1"/>
    <property type="molecule type" value="Genomic_DNA"/>
</dbReference>
<dbReference type="PIR" id="E69897">
    <property type="entry name" value="E69897"/>
</dbReference>
<dbReference type="RefSeq" id="NP_389756.1">
    <property type="nucleotide sequence ID" value="NC_000964.3"/>
</dbReference>
<dbReference type="RefSeq" id="WP_004399435.1">
    <property type="nucleotide sequence ID" value="NZ_OZ025638.1"/>
</dbReference>
<dbReference type="FunCoup" id="O34535">
    <property type="interactions" value="41"/>
</dbReference>
<dbReference type="STRING" id="224308.BSU18750"/>
<dbReference type="PaxDb" id="224308-BSU18750"/>
<dbReference type="EnsemblBacteria" id="CAB13767">
    <property type="protein sequence ID" value="CAB13767"/>
    <property type="gene ID" value="BSU_18750"/>
</dbReference>
<dbReference type="GeneID" id="940132"/>
<dbReference type="KEGG" id="bsu:BSU18750"/>
<dbReference type="PATRIC" id="fig|224308.179.peg.2044"/>
<dbReference type="eggNOG" id="COG3739">
    <property type="taxonomic scope" value="Bacteria"/>
</dbReference>
<dbReference type="InParanoid" id="O34535"/>
<dbReference type="OrthoDB" id="1550598at2"/>
<dbReference type="PhylomeDB" id="O34535"/>
<dbReference type="BioCyc" id="BSUB:BSU18750-MONOMER"/>
<dbReference type="Proteomes" id="UP000001570">
    <property type="component" value="Chromosome"/>
</dbReference>
<dbReference type="GO" id="GO:0005886">
    <property type="term" value="C:plasma membrane"/>
    <property type="evidence" value="ECO:0007669"/>
    <property type="project" value="UniProtKB-SubCell"/>
</dbReference>
<dbReference type="InterPro" id="IPR008535">
    <property type="entry name" value="DUF817"/>
</dbReference>
<dbReference type="Pfam" id="PF05675">
    <property type="entry name" value="DUF817"/>
    <property type="match status" value="1"/>
</dbReference>
<dbReference type="PIRSF" id="PIRSF009141">
    <property type="entry name" value="UCP009141"/>
    <property type="match status" value="1"/>
</dbReference>
<reference key="1">
    <citation type="submission" date="1997-10" db="EMBL/GenBank/DDBJ databases">
        <title>Sequence analysis of the Bacillus subtilis chromosome region between the terC and odhAB loci cloned in a yeast artificial chromosome.</title>
        <authorList>
            <person name="Lapidus A."/>
            <person name="Galleron N."/>
            <person name="Sorokin A."/>
            <person name="Ehrlich S.D."/>
        </authorList>
    </citation>
    <scope>NUCLEOTIDE SEQUENCE [GENOMIC DNA]</scope>
</reference>
<reference key="2">
    <citation type="journal article" date="1997" name="Nature">
        <title>The complete genome sequence of the Gram-positive bacterium Bacillus subtilis.</title>
        <authorList>
            <person name="Kunst F."/>
            <person name="Ogasawara N."/>
            <person name="Moszer I."/>
            <person name="Albertini A.M."/>
            <person name="Alloni G."/>
            <person name="Azevedo V."/>
            <person name="Bertero M.G."/>
            <person name="Bessieres P."/>
            <person name="Bolotin A."/>
            <person name="Borchert S."/>
            <person name="Borriss R."/>
            <person name="Boursier L."/>
            <person name="Brans A."/>
            <person name="Braun M."/>
            <person name="Brignell S.C."/>
            <person name="Bron S."/>
            <person name="Brouillet S."/>
            <person name="Bruschi C.V."/>
            <person name="Caldwell B."/>
            <person name="Capuano V."/>
            <person name="Carter N.M."/>
            <person name="Choi S.-K."/>
            <person name="Codani J.-J."/>
            <person name="Connerton I.F."/>
            <person name="Cummings N.J."/>
            <person name="Daniel R.A."/>
            <person name="Denizot F."/>
            <person name="Devine K.M."/>
            <person name="Duesterhoeft A."/>
            <person name="Ehrlich S.D."/>
            <person name="Emmerson P.T."/>
            <person name="Entian K.-D."/>
            <person name="Errington J."/>
            <person name="Fabret C."/>
            <person name="Ferrari E."/>
            <person name="Foulger D."/>
            <person name="Fritz C."/>
            <person name="Fujita M."/>
            <person name="Fujita Y."/>
            <person name="Fuma S."/>
            <person name="Galizzi A."/>
            <person name="Galleron N."/>
            <person name="Ghim S.-Y."/>
            <person name="Glaser P."/>
            <person name="Goffeau A."/>
            <person name="Golightly E.J."/>
            <person name="Grandi G."/>
            <person name="Guiseppi G."/>
            <person name="Guy B.J."/>
            <person name="Haga K."/>
            <person name="Haiech J."/>
            <person name="Harwood C.R."/>
            <person name="Henaut A."/>
            <person name="Hilbert H."/>
            <person name="Holsappel S."/>
            <person name="Hosono S."/>
            <person name="Hullo M.-F."/>
            <person name="Itaya M."/>
            <person name="Jones L.-M."/>
            <person name="Joris B."/>
            <person name="Karamata D."/>
            <person name="Kasahara Y."/>
            <person name="Klaerr-Blanchard M."/>
            <person name="Klein C."/>
            <person name="Kobayashi Y."/>
            <person name="Koetter P."/>
            <person name="Koningstein G."/>
            <person name="Krogh S."/>
            <person name="Kumano M."/>
            <person name="Kurita K."/>
            <person name="Lapidus A."/>
            <person name="Lardinois S."/>
            <person name="Lauber J."/>
            <person name="Lazarevic V."/>
            <person name="Lee S.-M."/>
            <person name="Levine A."/>
            <person name="Liu H."/>
            <person name="Masuda S."/>
            <person name="Mauel C."/>
            <person name="Medigue C."/>
            <person name="Medina N."/>
            <person name="Mellado R.P."/>
            <person name="Mizuno M."/>
            <person name="Moestl D."/>
            <person name="Nakai S."/>
            <person name="Noback M."/>
            <person name="Noone D."/>
            <person name="O'Reilly M."/>
            <person name="Ogawa K."/>
            <person name="Ogiwara A."/>
            <person name="Oudega B."/>
            <person name="Park S.-H."/>
            <person name="Parro V."/>
            <person name="Pohl T.M."/>
            <person name="Portetelle D."/>
            <person name="Porwollik S."/>
            <person name="Prescott A.M."/>
            <person name="Presecan E."/>
            <person name="Pujic P."/>
            <person name="Purnelle B."/>
            <person name="Rapoport G."/>
            <person name="Rey M."/>
            <person name="Reynolds S."/>
            <person name="Rieger M."/>
            <person name="Rivolta C."/>
            <person name="Rocha E."/>
            <person name="Roche B."/>
            <person name="Rose M."/>
            <person name="Sadaie Y."/>
            <person name="Sato T."/>
            <person name="Scanlan E."/>
            <person name="Schleich S."/>
            <person name="Schroeter R."/>
            <person name="Scoffone F."/>
            <person name="Sekiguchi J."/>
            <person name="Sekowska A."/>
            <person name="Seror S.J."/>
            <person name="Serror P."/>
            <person name="Shin B.-S."/>
            <person name="Soldo B."/>
            <person name="Sorokin A."/>
            <person name="Tacconi E."/>
            <person name="Takagi T."/>
            <person name="Takahashi H."/>
            <person name="Takemaru K."/>
            <person name="Takeuchi M."/>
            <person name="Tamakoshi A."/>
            <person name="Tanaka T."/>
            <person name="Terpstra P."/>
            <person name="Tognoni A."/>
            <person name="Tosato V."/>
            <person name="Uchiyama S."/>
            <person name="Vandenbol M."/>
            <person name="Vannier F."/>
            <person name="Vassarotti A."/>
            <person name="Viari A."/>
            <person name="Wambutt R."/>
            <person name="Wedler E."/>
            <person name="Wedler H."/>
            <person name="Weitzenegger T."/>
            <person name="Winters P."/>
            <person name="Wipat A."/>
            <person name="Yamamoto H."/>
            <person name="Yamane K."/>
            <person name="Yasumoto K."/>
            <person name="Yata K."/>
            <person name="Yoshida K."/>
            <person name="Yoshikawa H.-F."/>
            <person name="Zumstein E."/>
            <person name="Yoshikawa H."/>
            <person name="Danchin A."/>
        </authorList>
    </citation>
    <scope>NUCLEOTIDE SEQUENCE [LARGE SCALE GENOMIC DNA]</scope>
    <source>
        <strain>168</strain>
    </source>
</reference>
<sequence>MRAIKQIVHFGWEQALSCLFPAVIFASLAITQIIPLPFLPRYDWLLIICVLMQLWMVRSGLETRDELKVITLFHLIGLALELFKVHMGSWSYPEEGYSKIFGVPLYSGFMYASVASYLCQAWRRLKVELVKWPSFFAVVPLAAAIYLNFFTHHFSIDIRWWLSGLVIIVFWQTWVTYEVNGARYRMPLALSFILIGFFIWIAENIATFFGAWKYPNQIDTWSLVHLGKVSSWLLLVIVSFLIVASLKQVKEQSPTKAEMDESFS</sequence>
<comment type="subcellular location">
    <subcellularLocation>
        <location evidence="2">Cell membrane</location>
        <topology evidence="2">Multi-pass membrane protein</topology>
    </subcellularLocation>
</comment>
<gene>
    <name type="primary">yoaT</name>
    <name type="ordered locus">BSU18750</name>
</gene>
<feature type="chain" id="PRO_0000360568" description="Uncharacterized protein YoaT">
    <location>
        <begin position="1"/>
        <end position="264"/>
    </location>
</feature>
<feature type="transmembrane region" description="Helical" evidence="1">
    <location>
        <begin position="19"/>
        <end position="39"/>
    </location>
</feature>
<feature type="transmembrane region" description="Helical" evidence="1">
    <location>
        <begin position="42"/>
        <end position="62"/>
    </location>
</feature>
<feature type="transmembrane region" description="Helical" evidence="1">
    <location>
        <begin position="69"/>
        <end position="89"/>
    </location>
</feature>
<feature type="transmembrane region" description="Helical" evidence="1">
    <location>
        <begin position="100"/>
        <end position="120"/>
    </location>
</feature>
<feature type="transmembrane region" description="Helical" evidence="1">
    <location>
        <begin position="136"/>
        <end position="156"/>
    </location>
</feature>
<feature type="transmembrane region" description="Helical" evidence="1">
    <location>
        <begin position="160"/>
        <end position="180"/>
    </location>
</feature>
<feature type="transmembrane region" description="Helical" evidence="1">
    <location>
        <begin position="192"/>
        <end position="212"/>
    </location>
</feature>
<feature type="transmembrane region" description="Helical" evidence="1">
    <location>
        <begin position="223"/>
        <end position="243"/>
    </location>
</feature>
<evidence type="ECO:0000255" key="1"/>
<evidence type="ECO:0000305" key="2"/>